<organism>
    <name type="scientific">Alkalilimnicola ehrlichii (strain ATCC BAA-1101 / DSM 17681 / MLHE-1)</name>
    <dbReference type="NCBI Taxonomy" id="187272"/>
    <lineage>
        <taxon>Bacteria</taxon>
        <taxon>Pseudomonadati</taxon>
        <taxon>Pseudomonadota</taxon>
        <taxon>Gammaproteobacteria</taxon>
        <taxon>Chromatiales</taxon>
        <taxon>Ectothiorhodospiraceae</taxon>
        <taxon>Alkalilimnicola</taxon>
    </lineage>
</organism>
<comment type="function">
    <text evidence="1">NDH-1 shuttles electrons from NADH, via FMN and iron-sulfur (Fe-S) centers, to quinones in the respiratory chain. Couples the redox reaction to proton translocation (for every two electrons transferred, four hydrogen ions are translocated across the cytoplasmic membrane), and thus conserves the redox energy in a proton gradient (By similarity).</text>
</comment>
<comment type="catalytic activity">
    <reaction evidence="2">
        <text>a quinone + NADH + 5 H(+)(in) = a quinol + NAD(+) + 4 H(+)(out)</text>
        <dbReference type="Rhea" id="RHEA:57888"/>
        <dbReference type="ChEBI" id="CHEBI:15378"/>
        <dbReference type="ChEBI" id="CHEBI:24646"/>
        <dbReference type="ChEBI" id="CHEBI:57540"/>
        <dbReference type="ChEBI" id="CHEBI:57945"/>
        <dbReference type="ChEBI" id="CHEBI:132124"/>
    </reaction>
</comment>
<comment type="cofactor">
    <cofactor evidence="2">
        <name>[4Fe-4S] cluster</name>
        <dbReference type="ChEBI" id="CHEBI:49883"/>
    </cofactor>
    <text evidence="2">Binds 1 [4Fe-4S] cluster.</text>
</comment>
<comment type="subunit">
    <text evidence="2">NDH-1 is composed of 14 different subunits. Subunits NuoB, C, D, E, F, and G constitute the peripheral sector of the complex.</text>
</comment>
<comment type="subcellular location">
    <subcellularLocation>
        <location evidence="2">Cell inner membrane</location>
        <topology evidence="2">Peripheral membrane protein</topology>
        <orientation evidence="2">Cytoplasmic side</orientation>
    </subcellularLocation>
</comment>
<comment type="similarity">
    <text evidence="2">Belongs to the complex I 20 kDa subunit family.</text>
</comment>
<evidence type="ECO:0000250" key="1"/>
<evidence type="ECO:0000255" key="2">
    <source>
        <dbReference type="HAMAP-Rule" id="MF_01356"/>
    </source>
</evidence>
<accession>Q0A776</accession>
<sequence>MGVEGLLEKGFVTTSADKVINWARTGSMWPMTFGLACCAVEMMQAGAARYDLDRFGIIFRPSPRQSDVMIVAGTLCNKMAPALRKVYDQMPEPRWVISMGSCANGGGYYHYSYSVVRGCDRVVPVDVYVPGCPPTAEALIWGIMQLQKKIRTTNTIAR</sequence>
<protein>
    <recommendedName>
        <fullName evidence="2">NADH-quinone oxidoreductase subunit B</fullName>
        <ecNumber evidence="2">7.1.1.-</ecNumber>
    </recommendedName>
    <alternativeName>
        <fullName evidence="2">NADH dehydrogenase I subunit B</fullName>
    </alternativeName>
    <alternativeName>
        <fullName evidence="2">NDH-1 subunit B</fullName>
    </alternativeName>
</protein>
<keyword id="KW-0004">4Fe-4S</keyword>
<keyword id="KW-0997">Cell inner membrane</keyword>
<keyword id="KW-1003">Cell membrane</keyword>
<keyword id="KW-0408">Iron</keyword>
<keyword id="KW-0411">Iron-sulfur</keyword>
<keyword id="KW-0472">Membrane</keyword>
<keyword id="KW-0479">Metal-binding</keyword>
<keyword id="KW-0520">NAD</keyword>
<keyword id="KW-0874">Quinone</keyword>
<keyword id="KW-1185">Reference proteome</keyword>
<keyword id="KW-1278">Translocase</keyword>
<keyword id="KW-0813">Transport</keyword>
<keyword id="KW-0830">Ubiquinone</keyword>
<proteinExistence type="inferred from homology"/>
<reference key="1">
    <citation type="submission" date="2006-08" db="EMBL/GenBank/DDBJ databases">
        <title>Complete sequence of Alkalilimnicola ehrilichei MLHE-1.</title>
        <authorList>
            <person name="Copeland A."/>
            <person name="Lucas S."/>
            <person name="Lapidus A."/>
            <person name="Barry K."/>
            <person name="Detter J.C."/>
            <person name="Glavina del Rio T."/>
            <person name="Hammon N."/>
            <person name="Israni S."/>
            <person name="Dalin E."/>
            <person name="Tice H."/>
            <person name="Pitluck S."/>
            <person name="Sims D."/>
            <person name="Brettin T."/>
            <person name="Bruce D."/>
            <person name="Han C."/>
            <person name="Tapia R."/>
            <person name="Gilna P."/>
            <person name="Schmutz J."/>
            <person name="Larimer F."/>
            <person name="Land M."/>
            <person name="Hauser L."/>
            <person name="Kyrpides N."/>
            <person name="Mikhailova N."/>
            <person name="Oremland R.S."/>
            <person name="Hoeft S.E."/>
            <person name="Switzer-Blum J."/>
            <person name="Kulp T."/>
            <person name="King G."/>
            <person name="Tabita R."/>
            <person name="Witte B."/>
            <person name="Santini J.M."/>
            <person name="Basu P."/>
            <person name="Hollibaugh J.T."/>
            <person name="Xie G."/>
            <person name="Stolz J.F."/>
            <person name="Richardson P."/>
        </authorList>
    </citation>
    <scope>NUCLEOTIDE SEQUENCE [LARGE SCALE GENOMIC DNA]</scope>
    <source>
        <strain>ATCC BAA-1101 / DSM 17681 / MLHE-1</strain>
    </source>
</reference>
<dbReference type="EC" id="7.1.1.-" evidence="2"/>
<dbReference type="EMBL" id="CP000453">
    <property type="protein sequence ID" value="ABI57311.1"/>
    <property type="molecule type" value="Genomic_DNA"/>
</dbReference>
<dbReference type="RefSeq" id="WP_011629705.1">
    <property type="nucleotide sequence ID" value="NC_008340.1"/>
</dbReference>
<dbReference type="SMR" id="Q0A776"/>
<dbReference type="KEGG" id="aeh:Mlg_1969"/>
<dbReference type="eggNOG" id="COG0377">
    <property type="taxonomic scope" value="Bacteria"/>
</dbReference>
<dbReference type="HOGENOM" id="CLU_055737_7_3_6"/>
<dbReference type="OrthoDB" id="9786737at2"/>
<dbReference type="Proteomes" id="UP000001962">
    <property type="component" value="Chromosome"/>
</dbReference>
<dbReference type="GO" id="GO:0005886">
    <property type="term" value="C:plasma membrane"/>
    <property type="evidence" value="ECO:0007669"/>
    <property type="project" value="UniProtKB-SubCell"/>
</dbReference>
<dbReference type="GO" id="GO:0045271">
    <property type="term" value="C:respiratory chain complex I"/>
    <property type="evidence" value="ECO:0007669"/>
    <property type="project" value="TreeGrafter"/>
</dbReference>
<dbReference type="GO" id="GO:0051539">
    <property type="term" value="F:4 iron, 4 sulfur cluster binding"/>
    <property type="evidence" value="ECO:0007669"/>
    <property type="project" value="UniProtKB-KW"/>
</dbReference>
<dbReference type="GO" id="GO:0005506">
    <property type="term" value="F:iron ion binding"/>
    <property type="evidence" value="ECO:0007669"/>
    <property type="project" value="UniProtKB-UniRule"/>
</dbReference>
<dbReference type="GO" id="GO:0008137">
    <property type="term" value="F:NADH dehydrogenase (ubiquinone) activity"/>
    <property type="evidence" value="ECO:0007669"/>
    <property type="project" value="InterPro"/>
</dbReference>
<dbReference type="GO" id="GO:0050136">
    <property type="term" value="F:NADH:ubiquinone reductase (non-electrogenic) activity"/>
    <property type="evidence" value="ECO:0007669"/>
    <property type="project" value="UniProtKB-UniRule"/>
</dbReference>
<dbReference type="GO" id="GO:0048038">
    <property type="term" value="F:quinone binding"/>
    <property type="evidence" value="ECO:0007669"/>
    <property type="project" value="UniProtKB-KW"/>
</dbReference>
<dbReference type="GO" id="GO:0009060">
    <property type="term" value="P:aerobic respiration"/>
    <property type="evidence" value="ECO:0007669"/>
    <property type="project" value="TreeGrafter"/>
</dbReference>
<dbReference type="GO" id="GO:0015990">
    <property type="term" value="P:electron transport coupled proton transport"/>
    <property type="evidence" value="ECO:0007669"/>
    <property type="project" value="TreeGrafter"/>
</dbReference>
<dbReference type="FunFam" id="3.40.50.12280:FF:000001">
    <property type="entry name" value="NADH-quinone oxidoreductase subunit B 2"/>
    <property type="match status" value="1"/>
</dbReference>
<dbReference type="Gene3D" id="3.40.50.12280">
    <property type="match status" value="1"/>
</dbReference>
<dbReference type="HAMAP" id="MF_01356">
    <property type="entry name" value="NDH1_NuoB"/>
    <property type="match status" value="1"/>
</dbReference>
<dbReference type="InterPro" id="IPR006137">
    <property type="entry name" value="NADH_UbQ_OxRdtase-like_20kDa"/>
</dbReference>
<dbReference type="InterPro" id="IPR006138">
    <property type="entry name" value="NADH_UQ_OxRdtase_20Kd_su"/>
</dbReference>
<dbReference type="NCBIfam" id="TIGR01957">
    <property type="entry name" value="nuoB_fam"/>
    <property type="match status" value="1"/>
</dbReference>
<dbReference type="NCBIfam" id="NF005012">
    <property type="entry name" value="PRK06411.1"/>
    <property type="match status" value="1"/>
</dbReference>
<dbReference type="PANTHER" id="PTHR11995">
    <property type="entry name" value="NADH DEHYDROGENASE"/>
    <property type="match status" value="1"/>
</dbReference>
<dbReference type="PANTHER" id="PTHR11995:SF14">
    <property type="entry name" value="NADH DEHYDROGENASE [UBIQUINONE] IRON-SULFUR PROTEIN 7, MITOCHONDRIAL"/>
    <property type="match status" value="1"/>
</dbReference>
<dbReference type="Pfam" id="PF01058">
    <property type="entry name" value="Oxidored_q6"/>
    <property type="match status" value="1"/>
</dbReference>
<dbReference type="SUPFAM" id="SSF56770">
    <property type="entry name" value="HydA/Nqo6-like"/>
    <property type="match status" value="1"/>
</dbReference>
<dbReference type="PROSITE" id="PS01150">
    <property type="entry name" value="COMPLEX1_20K"/>
    <property type="match status" value="1"/>
</dbReference>
<name>NUOB_ALKEH</name>
<gene>
    <name evidence="2" type="primary">nuoB</name>
    <name type="ordered locus">Mlg_1969</name>
</gene>
<feature type="chain" id="PRO_0000358341" description="NADH-quinone oxidoreductase subunit B">
    <location>
        <begin position="1"/>
        <end position="158"/>
    </location>
</feature>
<feature type="binding site" evidence="2">
    <location>
        <position position="37"/>
    </location>
    <ligand>
        <name>[4Fe-4S] cluster</name>
        <dbReference type="ChEBI" id="CHEBI:49883"/>
    </ligand>
</feature>
<feature type="binding site" evidence="2">
    <location>
        <position position="38"/>
    </location>
    <ligand>
        <name>[4Fe-4S] cluster</name>
        <dbReference type="ChEBI" id="CHEBI:49883"/>
    </ligand>
</feature>
<feature type="binding site" evidence="2">
    <location>
        <position position="102"/>
    </location>
    <ligand>
        <name>[4Fe-4S] cluster</name>
        <dbReference type="ChEBI" id="CHEBI:49883"/>
    </ligand>
</feature>
<feature type="binding site" evidence="2">
    <location>
        <position position="132"/>
    </location>
    <ligand>
        <name>[4Fe-4S] cluster</name>
        <dbReference type="ChEBI" id="CHEBI:49883"/>
    </ligand>
</feature>